<keyword id="KW-0238">DNA-binding</keyword>
<keyword id="KW-0539">Nucleus</keyword>
<keyword id="KW-0611">Plant defense</keyword>
<keyword id="KW-1185">Reference proteome</keyword>
<keyword id="KW-0346">Stress response</keyword>
<keyword id="KW-0804">Transcription</keyword>
<keyword id="KW-0805">Transcription regulation</keyword>
<protein>
    <recommendedName>
        <fullName>WRKY transcription factor 8</fullName>
    </recommendedName>
    <alternativeName>
        <fullName>WRKY DNA-binding protein 8</fullName>
    </alternativeName>
</protein>
<accession>Q9FL26</accession>
<organism>
    <name type="scientific">Arabidopsis thaliana</name>
    <name type="common">Mouse-ear cress</name>
    <dbReference type="NCBI Taxonomy" id="3702"/>
    <lineage>
        <taxon>Eukaryota</taxon>
        <taxon>Viridiplantae</taxon>
        <taxon>Streptophyta</taxon>
        <taxon>Embryophyta</taxon>
        <taxon>Tracheophyta</taxon>
        <taxon>Spermatophyta</taxon>
        <taxon>Magnoliopsida</taxon>
        <taxon>eudicotyledons</taxon>
        <taxon>Gunneridae</taxon>
        <taxon>Pentapetalae</taxon>
        <taxon>rosids</taxon>
        <taxon>malvids</taxon>
        <taxon>Brassicales</taxon>
        <taxon>Brassicaceae</taxon>
        <taxon>Camelineae</taxon>
        <taxon>Arabidopsis</taxon>
    </lineage>
</organism>
<proteinExistence type="evidence at protein level"/>
<sequence length="326" mass="37294">MSHEIKDLNNYHYTSSYNHYNINNQNMINLPYVSGPSAYNANMISSSQVGFDLPSKNLSPQGAFELGFELSPSSSDFFNPSLDQENGLYNAYNYNSSQKSHEVVGDGCATIKSEVRVSASPSSSEADHHPGEDSGKIRKKREVRDGGEDDQRSQKVVKTKKKEEKKKEPRVSFMTKTEVDHLEDGYRWRKYGQKAVKNSPYPRSYYRCTTQKCNVKKRVERSYQDPTVVITTYESQHNHPIPTNRRTAMFSGTTASDYNPSSSPIFSDLIINTPRSFSNDDLFRVPYASVNVNPSYHQQQHGFHQQESEFELLKEMFPSVFFKQEP</sequence>
<dbReference type="EMBL" id="AF404855">
    <property type="protein sequence ID" value="AAK96193.1"/>
    <property type="molecule type" value="mRNA"/>
</dbReference>
<dbReference type="EMBL" id="AB010698">
    <property type="protein sequence ID" value="BAB11090.1"/>
    <property type="molecule type" value="Genomic_DNA"/>
</dbReference>
<dbReference type="EMBL" id="CP002688">
    <property type="protein sequence ID" value="AED95372.1"/>
    <property type="molecule type" value="Genomic_DNA"/>
</dbReference>
<dbReference type="EMBL" id="AY063916">
    <property type="protein sequence ID" value="AAL36272.1"/>
    <property type="molecule type" value="mRNA"/>
</dbReference>
<dbReference type="EMBL" id="AY096426">
    <property type="protein sequence ID" value="AAM20066.1"/>
    <property type="molecule type" value="mRNA"/>
</dbReference>
<dbReference type="RefSeq" id="NP_199447.1">
    <property type="nucleotide sequence ID" value="NM_124005.5"/>
</dbReference>
<dbReference type="SMR" id="Q9FL26"/>
<dbReference type="BioGRID" id="19927">
    <property type="interactions" value="2"/>
</dbReference>
<dbReference type="FunCoup" id="Q9FL26">
    <property type="interactions" value="1"/>
</dbReference>
<dbReference type="IntAct" id="Q9FL26">
    <property type="interactions" value="1"/>
</dbReference>
<dbReference type="STRING" id="3702.Q9FL26"/>
<dbReference type="iPTMnet" id="Q9FL26"/>
<dbReference type="PaxDb" id="3702-AT5G46350.1"/>
<dbReference type="ProteomicsDB" id="234368"/>
<dbReference type="EnsemblPlants" id="AT5G46350.1">
    <property type="protein sequence ID" value="AT5G46350.1"/>
    <property type="gene ID" value="AT5G46350"/>
</dbReference>
<dbReference type="GeneID" id="834678"/>
<dbReference type="Gramene" id="AT5G46350.1">
    <property type="protein sequence ID" value="AT5G46350.1"/>
    <property type="gene ID" value="AT5G46350"/>
</dbReference>
<dbReference type="KEGG" id="ath:AT5G46350"/>
<dbReference type="Araport" id="AT5G46350"/>
<dbReference type="TAIR" id="AT5G46350">
    <property type="gene designation" value="WRKY8"/>
</dbReference>
<dbReference type="eggNOG" id="ENOG502QQYS">
    <property type="taxonomic scope" value="Eukaryota"/>
</dbReference>
<dbReference type="HOGENOM" id="CLU_033779_2_0_1"/>
<dbReference type="InParanoid" id="Q9FL26"/>
<dbReference type="OMA" id="NRRTAMF"/>
<dbReference type="OrthoDB" id="1936515at2759"/>
<dbReference type="PhylomeDB" id="Q9FL26"/>
<dbReference type="PRO" id="PR:Q9FL26"/>
<dbReference type="Proteomes" id="UP000006548">
    <property type="component" value="Chromosome 5"/>
</dbReference>
<dbReference type="ExpressionAtlas" id="Q9FL26">
    <property type="expression patterns" value="baseline and differential"/>
</dbReference>
<dbReference type="GO" id="GO:0005634">
    <property type="term" value="C:nucleus"/>
    <property type="evidence" value="ECO:0000314"/>
    <property type="project" value="UniProtKB"/>
</dbReference>
<dbReference type="GO" id="GO:0003700">
    <property type="term" value="F:DNA-binding transcription factor activity"/>
    <property type="evidence" value="ECO:0000314"/>
    <property type="project" value="UniProtKB"/>
</dbReference>
<dbReference type="GO" id="GO:0043565">
    <property type="term" value="F:sequence-specific DNA binding"/>
    <property type="evidence" value="ECO:0007669"/>
    <property type="project" value="InterPro"/>
</dbReference>
<dbReference type="GO" id="GO:0070301">
    <property type="term" value="P:cellular response to hydrogen peroxide"/>
    <property type="evidence" value="ECO:0000270"/>
    <property type="project" value="TAIR"/>
</dbReference>
<dbReference type="GO" id="GO:0042742">
    <property type="term" value="P:defense response to bacterium"/>
    <property type="evidence" value="ECO:0000315"/>
    <property type="project" value="TAIR"/>
</dbReference>
<dbReference type="GO" id="GO:0050832">
    <property type="term" value="P:defense response to fungus"/>
    <property type="evidence" value="ECO:0000315"/>
    <property type="project" value="TAIR"/>
</dbReference>
<dbReference type="GO" id="GO:0051607">
    <property type="term" value="P:defense response to virus"/>
    <property type="evidence" value="ECO:0000315"/>
    <property type="project" value="CACAO"/>
</dbReference>
<dbReference type="GO" id="GO:1901002">
    <property type="term" value="P:positive regulation of response to salt stress"/>
    <property type="evidence" value="ECO:0000315"/>
    <property type="project" value="UniProtKB"/>
</dbReference>
<dbReference type="GO" id="GO:0009737">
    <property type="term" value="P:response to abscisic acid"/>
    <property type="evidence" value="ECO:0000270"/>
    <property type="project" value="TAIR"/>
</dbReference>
<dbReference type="FunFam" id="2.20.25.80:FF:000003">
    <property type="entry name" value="WRKY transcription factor 57"/>
    <property type="match status" value="1"/>
</dbReference>
<dbReference type="Gene3D" id="2.20.25.80">
    <property type="entry name" value="WRKY domain"/>
    <property type="match status" value="1"/>
</dbReference>
<dbReference type="InterPro" id="IPR017396">
    <property type="entry name" value="TF_WRKY_IIc"/>
</dbReference>
<dbReference type="InterPro" id="IPR003657">
    <property type="entry name" value="WRKY_dom"/>
</dbReference>
<dbReference type="InterPro" id="IPR036576">
    <property type="entry name" value="WRKY_dom_sf"/>
</dbReference>
<dbReference type="InterPro" id="IPR044810">
    <property type="entry name" value="WRKY_plant"/>
</dbReference>
<dbReference type="PANTHER" id="PTHR31221:SF152">
    <property type="entry name" value="WRKY TRANSCRIPTION FACTOR 8"/>
    <property type="match status" value="1"/>
</dbReference>
<dbReference type="PANTHER" id="PTHR31221">
    <property type="entry name" value="WRKY TRANSCRIPTION FACTOR PROTEIN 1-RELATED"/>
    <property type="match status" value="1"/>
</dbReference>
<dbReference type="Pfam" id="PF03106">
    <property type="entry name" value="WRKY"/>
    <property type="match status" value="1"/>
</dbReference>
<dbReference type="PIRSF" id="PIRSF038130">
    <property type="entry name" value="TF_WRKY_IIc"/>
    <property type="match status" value="1"/>
</dbReference>
<dbReference type="SMART" id="SM00774">
    <property type="entry name" value="WRKY"/>
    <property type="match status" value="1"/>
</dbReference>
<dbReference type="SUPFAM" id="SSF118290">
    <property type="entry name" value="WRKY DNA-binding domain"/>
    <property type="match status" value="1"/>
</dbReference>
<dbReference type="PROSITE" id="PS50811">
    <property type="entry name" value="WRKY"/>
    <property type="match status" value="1"/>
</dbReference>
<comment type="function">
    <text evidence="3 4 5">Transcription factor. Interacts specifically with the W box (5'-TTGAC[CT]-3'), a frequently occurring stress-responsive cis-acting element. Functions as a positive regulator of salt stress response. Binds the W box of LTI78/RD29A stress-response gene and directly regulates its transcription under salt stress. Functions antagonistically with VQ9 to regulate sodium and potassium homeostasis under salt stress by regulating the expression of downstream SOS (SALT OVERLY SENSITIVE) stress-responsive genes. The DNA-binding activity of WRKY8 is decreased by VQ9 (PubMed:23451802). Functions as a negative regulator of basal resistance to the bacterial pathogen P.syringae and as positive regulator of resistance to the fungal pathogen to B.cinerea (PubMed:20367464). Functions as a positive regulator of defense response againt tobamovirus (TMV) by regulating both the abscisic acid and ethylene signaling pathways. Positively regulates ABI4 expression and negatively modulates ACS6 and ERF104 expression by directly binding to the W box consensus motifs within their promoters (PubMed:23650359).</text>
</comment>
<comment type="subunit">
    <text evidence="4">Interacts with VQ9 (via N-terminus).</text>
</comment>
<comment type="subcellular location">
    <subcellularLocation>
        <location evidence="3 4">Nucleus</location>
    </subcellularLocation>
</comment>
<comment type="tissue specificity">
    <text evidence="4">Highly expressed in roots and at lower levels in rosette leaves, cauline leaves, stems, flowers and siliques.</text>
</comment>
<comment type="induction">
    <text evidence="3 4">By wounding, abscisic acid (ABA), salicylic acid (SA), H(2)O(2), and infection with P.syringae pv. tomato DC3000 and B.cinerea (PubMed:20367464). Induced by salt stress (PubMed:23451802).</text>
</comment>
<comment type="disruption phenotype">
    <text evidence="3 4">No visible phenotype under normal growth conditions (PubMed:20367464, PubMed:23451802). Mutant plants show increased resistance to the bacterial pathogen P.syringae and enhanced susceptibility to the fungal pathogen to B.cinerea (PubMed:20367464). Mutant plants display increased sensitivity to salt stress (PubMed:23451802).</text>
</comment>
<comment type="similarity">
    <text evidence="6">Belongs to the WRKY group II-c family.</text>
</comment>
<gene>
    <name type="primary">WRKY8</name>
    <name type="ordered locus">At5g46350</name>
    <name type="ORF">MPL12.15</name>
</gene>
<evidence type="ECO:0000255" key="1">
    <source>
        <dbReference type="PROSITE-ProRule" id="PRU00223"/>
    </source>
</evidence>
<evidence type="ECO:0000256" key="2">
    <source>
        <dbReference type="SAM" id="MobiDB-lite"/>
    </source>
</evidence>
<evidence type="ECO:0000269" key="3">
    <source>
    </source>
</evidence>
<evidence type="ECO:0000269" key="4">
    <source>
    </source>
</evidence>
<evidence type="ECO:0000269" key="5">
    <source>
    </source>
</evidence>
<evidence type="ECO:0000305" key="6"/>
<feature type="chain" id="PRO_0000133650" description="WRKY transcription factor 8">
    <location>
        <begin position="1"/>
        <end position="326"/>
    </location>
</feature>
<feature type="DNA-binding region" description="WRKY" evidence="1">
    <location>
        <begin position="177"/>
        <end position="242"/>
    </location>
</feature>
<feature type="region of interest" description="Disordered" evidence="2">
    <location>
        <begin position="115"/>
        <end position="172"/>
    </location>
</feature>
<feature type="compositionally biased region" description="Basic and acidic residues" evidence="2">
    <location>
        <begin position="125"/>
        <end position="153"/>
    </location>
</feature>
<feature type="compositionally biased region" description="Basic and acidic residues" evidence="2">
    <location>
        <begin position="161"/>
        <end position="170"/>
    </location>
</feature>
<name>WRKY8_ARATH</name>
<reference key="1">
    <citation type="submission" date="2001-08" db="EMBL/GenBank/DDBJ databases">
        <authorList>
            <person name="Ulker B."/>
            <person name="Kushnir S."/>
            <person name="Somssich I.E."/>
        </authorList>
    </citation>
    <scope>NUCLEOTIDE SEQUENCE [MRNA]</scope>
    <source>
        <strain>cv. Columbia</strain>
        <tissue>Flower</tissue>
    </source>
</reference>
<reference key="2">
    <citation type="journal article" date="1998" name="DNA Res.">
        <title>Structural analysis of Arabidopsis thaliana chromosome 5. V. Sequence features of the regions of 1,381,565 bp covered by twenty one physically assigned P1 and TAC clones.</title>
        <authorList>
            <person name="Kaneko T."/>
            <person name="Kotani H."/>
            <person name="Nakamura Y."/>
            <person name="Sato S."/>
            <person name="Asamizu E."/>
            <person name="Miyajima N."/>
            <person name="Tabata S."/>
        </authorList>
    </citation>
    <scope>NUCLEOTIDE SEQUENCE [LARGE SCALE GENOMIC DNA]</scope>
    <source>
        <strain>cv. Columbia</strain>
    </source>
</reference>
<reference key="3">
    <citation type="journal article" date="2017" name="Plant J.">
        <title>Araport11: a complete reannotation of the Arabidopsis thaliana reference genome.</title>
        <authorList>
            <person name="Cheng C.Y."/>
            <person name="Krishnakumar V."/>
            <person name="Chan A.P."/>
            <person name="Thibaud-Nissen F."/>
            <person name="Schobel S."/>
            <person name="Town C.D."/>
        </authorList>
    </citation>
    <scope>GENOME REANNOTATION</scope>
    <source>
        <strain>cv. Columbia</strain>
    </source>
</reference>
<reference key="4">
    <citation type="journal article" date="2003" name="Science">
        <title>Empirical analysis of transcriptional activity in the Arabidopsis genome.</title>
        <authorList>
            <person name="Yamada K."/>
            <person name="Lim J."/>
            <person name="Dale J.M."/>
            <person name="Chen H."/>
            <person name="Shinn P."/>
            <person name="Palm C.J."/>
            <person name="Southwick A.M."/>
            <person name="Wu H.C."/>
            <person name="Kim C.J."/>
            <person name="Nguyen M."/>
            <person name="Pham P.K."/>
            <person name="Cheuk R.F."/>
            <person name="Karlin-Newmann G."/>
            <person name="Liu S.X."/>
            <person name="Lam B."/>
            <person name="Sakano H."/>
            <person name="Wu T."/>
            <person name="Yu G."/>
            <person name="Miranda M."/>
            <person name="Quach H.L."/>
            <person name="Tripp M."/>
            <person name="Chang C.H."/>
            <person name="Lee J.M."/>
            <person name="Toriumi M.J."/>
            <person name="Chan M.M."/>
            <person name="Tang C.C."/>
            <person name="Onodera C.S."/>
            <person name="Deng J.M."/>
            <person name="Akiyama K."/>
            <person name="Ansari Y."/>
            <person name="Arakawa T."/>
            <person name="Banh J."/>
            <person name="Banno F."/>
            <person name="Bowser L."/>
            <person name="Brooks S.Y."/>
            <person name="Carninci P."/>
            <person name="Chao Q."/>
            <person name="Choy N."/>
            <person name="Enju A."/>
            <person name="Goldsmith A.D."/>
            <person name="Gurjal M."/>
            <person name="Hansen N.F."/>
            <person name="Hayashizaki Y."/>
            <person name="Johnson-Hopson C."/>
            <person name="Hsuan V.W."/>
            <person name="Iida K."/>
            <person name="Karnes M."/>
            <person name="Khan S."/>
            <person name="Koesema E."/>
            <person name="Ishida J."/>
            <person name="Jiang P.X."/>
            <person name="Jones T."/>
            <person name="Kawai J."/>
            <person name="Kamiya A."/>
            <person name="Meyers C."/>
            <person name="Nakajima M."/>
            <person name="Narusaka M."/>
            <person name="Seki M."/>
            <person name="Sakurai T."/>
            <person name="Satou M."/>
            <person name="Tamse R."/>
            <person name="Vaysberg M."/>
            <person name="Wallender E.K."/>
            <person name="Wong C."/>
            <person name="Yamamura Y."/>
            <person name="Yuan S."/>
            <person name="Shinozaki K."/>
            <person name="Davis R.W."/>
            <person name="Theologis A."/>
            <person name="Ecker J.R."/>
        </authorList>
    </citation>
    <scope>NUCLEOTIDE SEQUENCE [LARGE SCALE MRNA]</scope>
    <source>
        <strain>cv. Columbia</strain>
    </source>
</reference>
<reference key="5">
    <citation type="journal article" date="2010" name="Mol. Plant Microbe Interact.">
        <title>Wounding-induced WRKY8 is involved in basal defense in Arabidopsis.</title>
        <authorList>
            <person name="Chen L."/>
            <person name="Zhang L."/>
            <person name="Yu D."/>
        </authorList>
    </citation>
    <scope>FUNCTION</scope>
    <scope>SUBCELLULAR LOCATION</scope>
    <scope>INDUCTION</scope>
    <scope>DISRUPTION PHENOTYPE</scope>
</reference>
<reference key="6">
    <citation type="journal article" date="2013" name="Plant J.">
        <title>Arabidopsis transcription factor WRKY8 functions antagonistically with its interacting partner VQ9 to modulate salinity stress tolerance.</title>
        <authorList>
            <person name="Hu Y."/>
            <person name="Chen L."/>
            <person name="Wang H."/>
            <person name="Zhang L."/>
            <person name="Wang F."/>
            <person name="Yu D."/>
        </authorList>
    </citation>
    <scope>FUNCTION</scope>
    <scope>INTERACTION WITH VQ9</scope>
    <scope>SUBCELLULAR LOCATION</scope>
    <scope>TISSUE SPECIFICITY</scope>
    <scope>INDUCTION BY SALT</scope>
    <scope>DISRUPTION PHENOTYPE</scope>
</reference>
<reference key="7">
    <citation type="journal article" date="2013" name="Proc. Natl. Acad. Sci. U.S.A.">
        <title>WRKY8 transcription factor functions in the TMV-cg defense response by mediating both abscisic acid and ethylene signaling in Arabidopsis.</title>
        <authorList>
            <person name="Chen L."/>
            <person name="Zhang L."/>
            <person name="Li D."/>
            <person name="Wang F."/>
            <person name="Yu D."/>
        </authorList>
    </citation>
    <scope>FUNCTION</scope>
</reference>